<keyword id="KW-0413">Isomerase</keyword>
<keyword id="KW-1185">Reference proteome</keyword>
<keyword id="KW-0819">tRNA processing</keyword>
<gene>
    <name evidence="1" type="primary">truA</name>
    <name type="ordered locus">HD_1104</name>
</gene>
<sequence length="261" mass="29462">MKVALGIEYDGSNYFGWQRQAEVVSVQQTLEEALSKVTNTTIEVFCAGRTDSGVHGTGQVVHFDTEVERPLASWCFGTNAHLANDIAVKWAVKVAEDFHARFSATARRYRYIIFNSKLRTAILPKGVAHYHYPLDAQKMHQAGQYLLGEQDFSSFRAAKCQSHTPWRNIHHLNVVRQGNYVIVDIQANAFVHHMVRNIVGSLLEVGQGRQPIEWIKWLLEQKNRQLAAPTTKAEGLYLVNVEYPSRFGIPKTALGPLFLAD</sequence>
<protein>
    <recommendedName>
        <fullName evidence="1">tRNA pseudouridine synthase A</fullName>
        <ecNumber evidence="1">5.4.99.12</ecNumber>
    </recommendedName>
    <alternativeName>
        <fullName evidence="1">tRNA pseudouridine(38-40) synthase</fullName>
    </alternativeName>
    <alternativeName>
        <fullName evidence="1">tRNA pseudouridylate synthase I</fullName>
    </alternativeName>
    <alternativeName>
        <fullName evidence="1">tRNA-uridine isomerase I</fullName>
    </alternativeName>
</protein>
<dbReference type="EC" id="5.4.99.12" evidence="1"/>
<dbReference type="EMBL" id="AE017143">
    <property type="protein sequence ID" value="AAP95970.1"/>
    <property type="molecule type" value="Genomic_DNA"/>
</dbReference>
<dbReference type="RefSeq" id="WP_010945019.1">
    <property type="nucleotide sequence ID" value="NC_002940.2"/>
</dbReference>
<dbReference type="SMR" id="Q7U335"/>
<dbReference type="STRING" id="233412.HD_1104"/>
<dbReference type="KEGG" id="hdu:HD_1104"/>
<dbReference type="eggNOG" id="COG0101">
    <property type="taxonomic scope" value="Bacteria"/>
</dbReference>
<dbReference type="HOGENOM" id="CLU_014673_0_2_6"/>
<dbReference type="OrthoDB" id="9811823at2"/>
<dbReference type="Proteomes" id="UP000001022">
    <property type="component" value="Chromosome"/>
</dbReference>
<dbReference type="GO" id="GO:0003723">
    <property type="term" value="F:RNA binding"/>
    <property type="evidence" value="ECO:0007669"/>
    <property type="project" value="InterPro"/>
</dbReference>
<dbReference type="GO" id="GO:0160147">
    <property type="term" value="F:tRNA pseudouridine(38-40) synthase activity"/>
    <property type="evidence" value="ECO:0007669"/>
    <property type="project" value="UniProtKB-EC"/>
</dbReference>
<dbReference type="GO" id="GO:0031119">
    <property type="term" value="P:tRNA pseudouridine synthesis"/>
    <property type="evidence" value="ECO:0007669"/>
    <property type="project" value="UniProtKB-UniRule"/>
</dbReference>
<dbReference type="CDD" id="cd02570">
    <property type="entry name" value="PseudoU_synth_EcTruA"/>
    <property type="match status" value="1"/>
</dbReference>
<dbReference type="FunFam" id="3.30.70.580:FF:000001">
    <property type="entry name" value="tRNA pseudouridine synthase A"/>
    <property type="match status" value="1"/>
</dbReference>
<dbReference type="FunFam" id="3.30.70.660:FF:000001">
    <property type="entry name" value="tRNA pseudouridine synthase A"/>
    <property type="match status" value="1"/>
</dbReference>
<dbReference type="Gene3D" id="3.30.70.660">
    <property type="entry name" value="Pseudouridine synthase I, catalytic domain, C-terminal subdomain"/>
    <property type="match status" value="1"/>
</dbReference>
<dbReference type="Gene3D" id="3.30.70.580">
    <property type="entry name" value="Pseudouridine synthase I, catalytic domain, N-terminal subdomain"/>
    <property type="match status" value="1"/>
</dbReference>
<dbReference type="HAMAP" id="MF_00171">
    <property type="entry name" value="TruA"/>
    <property type="match status" value="1"/>
</dbReference>
<dbReference type="InterPro" id="IPR020103">
    <property type="entry name" value="PsdUridine_synth_cat_dom_sf"/>
</dbReference>
<dbReference type="InterPro" id="IPR001406">
    <property type="entry name" value="PsdUridine_synth_TruA"/>
</dbReference>
<dbReference type="InterPro" id="IPR020097">
    <property type="entry name" value="PsdUridine_synth_TruA_a/b_dom"/>
</dbReference>
<dbReference type="InterPro" id="IPR020095">
    <property type="entry name" value="PsdUridine_synth_TruA_C"/>
</dbReference>
<dbReference type="InterPro" id="IPR020094">
    <property type="entry name" value="TruA/RsuA/RluB/E/F_N"/>
</dbReference>
<dbReference type="NCBIfam" id="TIGR00071">
    <property type="entry name" value="hisT_truA"/>
    <property type="match status" value="1"/>
</dbReference>
<dbReference type="PANTHER" id="PTHR11142">
    <property type="entry name" value="PSEUDOURIDYLATE SYNTHASE"/>
    <property type="match status" value="1"/>
</dbReference>
<dbReference type="PANTHER" id="PTHR11142:SF0">
    <property type="entry name" value="TRNA PSEUDOURIDINE SYNTHASE-LIKE 1"/>
    <property type="match status" value="1"/>
</dbReference>
<dbReference type="Pfam" id="PF01416">
    <property type="entry name" value="PseudoU_synth_1"/>
    <property type="match status" value="2"/>
</dbReference>
<dbReference type="PIRSF" id="PIRSF001430">
    <property type="entry name" value="tRNA_psdUrid_synth"/>
    <property type="match status" value="1"/>
</dbReference>
<dbReference type="SUPFAM" id="SSF55120">
    <property type="entry name" value="Pseudouridine synthase"/>
    <property type="match status" value="1"/>
</dbReference>
<evidence type="ECO:0000255" key="1">
    <source>
        <dbReference type="HAMAP-Rule" id="MF_00171"/>
    </source>
</evidence>
<name>TRUA_HAEDU</name>
<comment type="function">
    <text evidence="1">Formation of pseudouridine at positions 38, 39 and 40 in the anticodon stem and loop of transfer RNAs.</text>
</comment>
<comment type="catalytic activity">
    <reaction evidence="1">
        <text>uridine(38/39/40) in tRNA = pseudouridine(38/39/40) in tRNA</text>
        <dbReference type="Rhea" id="RHEA:22376"/>
        <dbReference type="Rhea" id="RHEA-COMP:10085"/>
        <dbReference type="Rhea" id="RHEA-COMP:10087"/>
        <dbReference type="ChEBI" id="CHEBI:65314"/>
        <dbReference type="ChEBI" id="CHEBI:65315"/>
        <dbReference type="EC" id="5.4.99.12"/>
    </reaction>
</comment>
<comment type="subunit">
    <text evidence="1">Homodimer.</text>
</comment>
<comment type="similarity">
    <text evidence="1">Belongs to the tRNA pseudouridine synthase TruA family.</text>
</comment>
<feature type="chain" id="PRO_0000057387" description="tRNA pseudouridine synthase A">
    <location>
        <begin position="1"/>
        <end position="261"/>
    </location>
</feature>
<feature type="active site" description="Nucleophile" evidence="1">
    <location>
        <position position="51"/>
    </location>
</feature>
<feature type="binding site" evidence="1">
    <location>
        <position position="109"/>
    </location>
    <ligand>
        <name>substrate</name>
    </ligand>
</feature>
<proteinExistence type="inferred from homology"/>
<accession>Q7U335</accession>
<reference key="1">
    <citation type="submission" date="2003-06" db="EMBL/GenBank/DDBJ databases">
        <title>The complete genome sequence of Haemophilus ducreyi.</title>
        <authorList>
            <person name="Munson R.S. Jr."/>
            <person name="Ray W.C."/>
            <person name="Mahairas G."/>
            <person name="Sabo P."/>
            <person name="Mungur R."/>
            <person name="Johnson L."/>
            <person name="Nguyen D."/>
            <person name="Wang J."/>
            <person name="Forst C."/>
            <person name="Hood L."/>
        </authorList>
    </citation>
    <scope>NUCLEOTIDE SEQUENCE [LARGE SCALE GENOMIC DNA]</scope>
    <source>
        <strain>35000HP / ATCC 700724</strain>
    </source>
</reference>
<organism>
    <name type="scientific">Haemophilus ducreyi (strain 35000HP / ATCC 700724)</name>
    <dbReference type="NCBI Taxonomy" id="233412"/>
    <lineage>
        <taxon>Bacteria</taxon>
        <taxon>Pseudomonadati</taxon>
        <taxon>Pseudomonadota</taxon>
        <taxon>Gammaproteobacteria</taxon>
        <taxon>Pasteurellales</taxon>
        <taxon>Pasteurellaceae</taxon>
        <taxon>Haemophilus</taxon>
    </lineage>
</organism>